<gene>
    <name evidence="1" type="primary">hypA</name>
    <name type="ordered locus">Cj0627</name>
</gene>
<proteinExistence type="inferred from homology"/>
<organism>
    <name type="scientific">Campylobacter jejuni subsp. jejuni serotype O:2 (strain ATCC 700819 / NCTC 11168)</name>
    <dbReference type="NCBI Taxonomy" id="192222"/>
    <lineage>
        <taxon>Bacteria</taxon>
        <taxon>Pseudomonadati</taxon>
        <taxon>Campylobacterota</taxon>
        <taxon>Epsilonproteobacteria</taxon>
        <taxon>Campylobacterales</taxon>
        <taxon>Campylobacteraceae</taxon>
        <taxon>Campylobacter</taxon>
    </lineage>
</organism>
<reference key="1">
    <citation type="journal article" date="2000" name="Nature">
        <title>The genome sequence of the food-borne pathogen Campylobacter jejuni reveals hypervariable sequences.</title>
        <authorList>
            <person name="Parkhill J."/>
            <person name="Wren B.W."/>
            <person name="Mungall K.L."/>
            <person name="Ketley J.M."/>
            <person name="Churcher C.M."/>
            <person name="Basham D."/>
            <person name="Chillingworth T."/>
            <person name="Davies R.M."/>
            <person name="Feltwell T."/>
            <person name="Holroyd S."/>
            <person name="Jagels K."/>
            <person name="Karlyshev A.V."/>
            <person name="Moule S."/>
            <person name="Pallen M.J."/>
            <person name="Penn C.W."/>
            <person name="Quail M.A."/>
            <person name="Rajandream M.A."/>
            <person name="Rutherford K.M."/>
            <person name="van Vliet A.H.M."/>
            <person name="Whitehead S."/>
            <person name="Barrell B.G."/>
        </authorList>
    </citation>
    <scope>NUCLEOTIDE SEQUENCE [LARGE SCALE GENOMIC DNA]</scope>
    <source>
        <strain>ATCC 700819 / NCTC 11168</strain>
    </source>
</reference>
<protein>
    <recommendedName>
        <fullName evidence="1">Hydrogenase maturation factor HypA</fullName>
    </recommendedName>
</protein>
<sequence length="114" mass="13244">MHELSIVESLIELCEENALNNKAYNVQEIYVKIGRLSGIEVDLFKRCFETFKENSNICKNAKLFIELAPLEILCLKCDQTSILEENVFKCPKCQSIEYKIIQGEDLHLMRLVMK</sequence>
<dbReference type="EMBL" id="AL111168">
    <property type="protein sequence ID" value="CAL34773.1"/>
    <property type="molecule type" value="Genomic_DNA"/>
</dbReference>
<dbReference type="PIR" id="B81411">
    <property type="entry name" value="B81411"/>
</dbReference>
<dbReference type="RefSeq" id="WP_002864538.1">
    <property type="nucleotide sequence ID" value="NZ_SZUC01000002.1"/>
</dbReference>
<dbReference type="RefSeq" id="YP_002344057.1">
    <property type="nucleotide sequence ID" value="NC_002163.1"/>
</dbReference>
<dbReference type="SMR" id="Q9PHP0"/>
<dbReference type="IntAct" id="Q9PHP0">
    <property type="interactions" value="34"/>
</dbReference>
<dbReference type="STRING" id="192222.Cj0627"/>
<dbReference type="PaxDb" id="192222-Cj0627"/>
<dbReference type="EnsemblBacteria" id="CAL34773">
    <property type="protein sequence ID" value="CAL34773"/>
    <property type="gene ID" value="Cj0627"/>
</dbReference>
<dbReference type="GeneID" id="904956"/>
<dbReference type="KEGG" id="cje:Cj0627"/>
<dbReference type="PATRIC" id="fig|192222.6.peg.619"/>
<dbReference type="eggNOG" id="COG0375">
    <property type="taxonomic scope" value="Bacteria"/>
</dbReference>
<dbReference type="HOGENOM" id="CLU_126929_6_0_7"/>
<dbReference type="OrthoDB" id="9800361at2"/>
<dbReference type="Proteomes" id="UP000000799">
    <property type="component" value="Chromosome"/>
</dbReference>
<dbReference type="GO" id="GO:0016151">
    <property type="term" value="F:nickel cation binding"/>
    <property type="evidence" value="ECO:0007669"/>
    <property type="project" value="UniProtKB-UniRule"/>
</dbReference>
<dbReference type="GO" id="GO:0008270">
    <property type="term" value="F:zinc ion binding"/>
    <property type="evidence" value="ECO:0007669"/>
    <property type="project" value="UniProtKB-UniRule"/>
</dbReference>
<dbReference type="GO" id="GO:0051604">
    <property type="term" value="P:protein maturation"/>
    <property type="evidence" value="ECO:0007669"/>
    <property type="project" value="InterPro"/>
</dbReference>
<dbReference type="GO" id="GO:0036211">
    <property type="term" value="P:protein modification process"/>
    <property type="evidence" value="ECO:0007669"/>
    <property type="project" value="UniProtKB-UniRule"/>
</dbReference>
<dbReference type="Gene3D" id="3.30.2320.80">
    <property type="match status" value="1"/>
</dbReference>
<dbReference type="HAMAP" id="MF_00213">
    <property type="entry name" value="HypA_HybF"/>
    <property type="match status" value="1"/>
</dbReference>
<dbReference type="InterPro" id="IPR020538">
    <property type="entry name" value="Hydgase_Ni_incorp_HypA/HybF_CS"/>
</dbReference>
<dbReference type="InterPro" id="IPR000688">
    <property type="entry name" value="HypA/HybF"/>
</dbReference>
<dbReference type="NCBIfam" id="TIGR00100">
    <property type="entry name" value="hypA"/>
    <property type="match status" value="1"/>
</dbReference>
<dbReference type="PANTHER" id="PTHR34535">
    <property type="entry name" value="HYDROGENASE MATURATION FACTOR HYPA"/>
    <property type="match status" value="1"/>
</dbReference>
<dbReference type="PANTHER" id="PTHR34535:SF3">
    <property type="entry name" value="HYDROGENASE MATURATION FACTOR HYPA"/>
    <property type="match status" value="1"/>
</dbReference>
<dbReference type="Pfam" id="PF01155">
    <property type="entry name" value="HypA"/>
    <property type="match status" value="1"/>
</dbReference>
<dbReference type="PIRSF" id="PIRSF004761">
    <property type="entry name" value="Hydrgn_mat_HypA"/>
    <property type="match status" value="1"/>
</dbReference>
<dbReference type="PROSITE" id="PS01249">
    <property type="entry name" value="HYPA"/>
    <property type="match status" value="1"/>
</dbReference>
<accession>Q9PHP0</accession>
<accession>Q0PAP0</accession>
<evidence type="ECO:0000255" key="1">
    <source>
        <dbReference type="HAMAP-Rule" id="MF_00213"/>
    </source>
</evidence>
<evidence type="ECO:0000305" key="2"/>
<feature type="chain" id="PRO_0000129073" description="Hydrogenase maturation factor HypA">
    <location>
        <begin position="1"/>
        <end position="114"/>
    </location>
</feature>
<feature type="binding site" evidence="1">
    <location>
        <position position="2"/>
    </location>
    <ligand>
        <name>Ni(2+)</name>
        <dbReference type="ChEBI" id="CHEBI:49786"/>
    </ligand>
</feature>
<feature type="binding site" evidence="1">
    <location>
        <position position="74"/>
    </location>
    <ligand>
        <name>Zn(2+)</name>
        <dbReference type="ChEBI" id="CHEBI:29105"/>
    </ligand>
</feature>
<feature type="binding site" evidence="1">
    <location>
        <position position="77"/>
    </location>
    <ligand>
        <name>Zn(2+)</name>
        <dbReference type="ChEBI" id="CHEBI:29105"/>
    </ligand>
</feature>
<feature type="binding site" evidence="1">
    <location>
        <position position="90"/>
    </location>
    <ligand>
        <name>Zn(2+)</name>
        <dbReference type="ChEBI" id="CHEBI:29105"/>
    </ligand>
</feature>
<feature type="binding site" evidence="1">
    <location>
        <position position="93"/>
    </location>
    <ligand>
        <name>Zn(2+)</name>
        <dbReference type="ChEBI" id="CHEBI:29105"/>
    </ligand>
</feature>
<name>HYPA_CAMJE</name>
<keyword id="KW-0479">Metal-binding</keyword>
<keyword id="KW-0533">Nickel</keyword>
<keyword id="KW-1185">Reference proteome</keyword>
<keyword id="KW-0862">Zinc</keyword>
<comment type="function">
    <text evidence="1">Involved in the maturation of [NiFe] hydrogenases. Required for nickel insertion into the metal center of the hydrogenase.</text>
</comment>
<comment type="similarity">
    <text evidence="1 2">Belongs to the HypA/HybF family.</text>
</comment>